<dbReference type="EMBL" id="CP000469">
    <property type="protein sequence ID" value="ABK48672.1"/>
    <property type="molecule type" value="Genomic_DNA"/>
</dbReference>
<dbReference type="RefSeq" id="WP_011717370.1">
    <property type="nucleotide sequence ID" value="NC_008577.1"/>
</dbReference>
<dbReference type="SMR" id="A0KY03"/>
<dbReference type="STRING" id="94122.Shewana3_2443"/>
<dbReference type="KEGG" id="shn:Shewana3_2443"/>
<dbReference type="eggNOG" id="COG0326">
    <property type="taxonomic scope" value="Bacteria"/>
</dbReference>
<dbReference type="HOGENOM" id="CLU_006684_3_0_6"/>
<dbReference type="OrthoDB" id="9802640at2"/>
<dbReference type="Proteomes" id="UP000002589">
    <property type="component" value="Chromosome"/>
</dbReference>
<dbReference type="GO" id="GO:0005737">
    <property type="term" value="C:cytoplasm"/>
    <property type="evidence" value="ECO:0007669"/>
    <property type="project" value="UniProtKB-SubCell"/>
</dbReference>
<dbReference type="GO" id="GO:0005524">
    <property type="term" value="F:ATP binding"/>
    <property type="evidence" value="ECO:0007669"/>
    <property type="project" value="UniProtKB-UniRule"/>
</dbReference>
<dbReference type="GO" id="GO:0016887">
    <property type="term" value="F:ATP hydrolysis activity"/>
    <property type="evidence" value="ECO:0007669"/>
    <property type="project" value="InterPro"/>
</dbReference>
<dbReference type="GO" id="GO:0140662">
    <property type="term" value="F:ATP-dependent protein folding chaperone"/>
    <property type="evidence" value="ECO:0007669"/>
    <property type="project" value="InterPro"/>
</dbReference>
<dbReference type="GO" id="GO:0051082">
    <property type="term" value="F:unfolded protein binding"/>
    <property type="evidence" value="ECO:0007669"/>
    <property type="project" value="UniProtKB-UniRule"/>
</dbReference>
<dbReference type="CDD" id="cd16927">
    <property type="entry name" value="HATPase_Hsp90-like"/>
    <property type="match status" value="1"/>
</dbReference>
<dbReference type="FunFam" id="3.30.230.80:FF:000002">
    <property type="entry name" value="Molecular chaperone HtpG"/>
    <property type="match status" value="1"/>
</dbReference>
<dbReference type="FunFam" id="3.30.565.10:FF:000009">
    <property type="entry name" value="Molecular chaperone HtpG"/>
    <property type="match status" value="1"/>
</dbReference>
<dbReference type="Gene3D" id="3.30.230.80">
    <property type="match status" value="1"/>
</dbReference>
<dbReference type="Gene3D" id="3.40.50.11260">
    <property type="match status" value="1"/>
</dbReference>
<dbReference type="Gene3D" id="1.20.120.790">
    <property type="entry name" value="Heat shock protein 90, C-terminal domain"/>
    <property type="match status" value="1"/>
</dbReference>
<dbReference type="Gene3D" id="3.30.565.10">
    <property type="entry name" value="Histidine kinase-like ATPase, C-terminal domain"/>
    <property type="match status" value="1"/>
</dbReference>
<dbReference type="HAMAP" id="MF_00505">
    <property type="entry name" value="HSP90"/>
    <property type="match status" value="1"/>
</dbReference>
<dbReference type="InterPro" id="IPR036890">
    <property type="entry name" value="HATPase_C_sf"/>
</dbReference>
<dbReference type="InterPro" id="IPR019805">
    <property type="entry name" value="Heat_shock_protein_90_CS"/>
</dbReference>
<dbReference type="InterPro" id="IPR037196">
    <property type="entry name" value="HSP90_C"/>
</dbReference>
<dbReference type="InterPro" id="IPR001404">
    <property type="entry name" value="Hsp90_fam"/>
</dbReference>
<dbReference type="InterPro" id="IPR020575">
    <property type="entry name" value="Hsp90_N"/>
</dbReference>
<dbReference type="InterPro" id="IPR020568">
    <property type="entry name" value="Ribosomal_Su5_D2-typ_SF"/>
</dbReference>
<dbReference type="NCBIfam" id="NF003555">
    <property type="entry name" value="PRK05218.1"/>
    <property type="match status" value="1"/>
</dbReference>
<dbReference type="PANTHER" id="PTHR11528">
    <property type="entry name" value="HEAT SHOCK PROTEIN 90 FAMILY MEMBER"/>
    <property type="match status" value="1"/>
</dbReference>
<dbReference type="Pfam" id="PF13589">
    <property type="entry name" value="HATPase_c_3"/>
    <property type="match status" value="1"/>
</dbReference>
<dbReference type="Pfam" id="PF00183">
    <property type="entry name" value="HSP90"/>
    <property type="match status" value="1"/>
</dbReference>
<dbReference type="PIRSF" id="PIRSF002583">
    <property type="entry name" value="Hsp90"/>
    <property type="match status" value="1"/>
</dbReference>
<dbReference type="PRINTS" id="PR00775">
    <property type="entry name" value="HEATSHOCK90"/>
</dbReference>
<dbReference type="SMART" id="SM00387">
    <property type="entry name" value="HATPase_c"/>
    <property type="match status" value="1"/>
</dbReference>
<dbReference type="SUPFAM" id="SSF55874">
    <property type="entry name" value="ATPase domain of HSP90 chaperone/DNA topoisomerase II/histidine kinase"/>
    <property type="match status" value="1"/>
</dbReference>
<dbReference type="SUPFAM" id="SSF110942">
    <property type="entry name" value="HSP90 C-terminal domain"/>
    <property type="match status" value="1"/>
</dbReference>
<dbReference type="SUPFAM" id="SSF54211">
    <property type="entry name" value="Ribosomal protein S5 domain 2-like"/>
    <property type="match status" value="1"/>
</dbReference>
<dbReference type="PROSITE" id="PS00298">
    <property type="entry name" value="HSP90"/>
    <property type="match status" value="1"/>
</dbReference>
<organism>
    <name type="scientific">Shewanella sp. (strain ANA-3)</name>
    <dbReference type="NCBI Taxonomy" id="94122"/>
    <lineage>
        <taxon>Bacteria</taxon>
        <taxon>Pseudomonadati</taxon>
        <taxon>Pseudomonadota</taxon>
        <taxon>Gammaproteobacteria</taxon>
        <taxon>Alteromonadales</taxon>
        <taxon>Shewanellaceae</taxon>
        <taxon>Shewanella</taxon>
    </lineage>
</organism>
<protein>
    <recommendedName>
        <fullName evidence="1">Chaperone protein HtpG</fullName>
    </recommendedName>
    <alternativeName>
        <fullName evidence="1">Heat shock protein HtpG</fullName>
    </alternativeName>
    <alternativeName>
        <fullName evidence="1">High temperature protein G</fullName>
    </alternativeName>
</protein>
<comment type="function">
    <text evidence="1">Molecular chaperone. Has ATPase activity.</text>
</comment>
<comment type="subunit">
    <text evidence="1">Homodimer.</text>
</comment>
<comment type="subcellular location">
    <subcellularLocation>
        <location evidence="1">Cytoplasm</location>
    </subcellularLocation>
</comment>
<comment type="similarity">
    <text evidence="1">Belongs to the heat shock protein 90 family.</text>
</comment>
<name>HTPG_SHESA</name>
<keyword id="KW-0067">ATP-binding</keyword>
<keyword id="KW-0143">Chaperone</keyword>
<keyword id="KW-0963">Cytoplasm</keyword>
<keyword id="KW-0547">Nucleotide-binding</keyword>
<keyword id="KW-0346">Stress response</keyword>
<sequence>MSQQETHGFQTEVKQLLHLMIHSLYSNKEIFLRELVSNAADAADKLRYLALTNDALYEGDGELRVRISADKEKGTVTIEDNGVGMTRDGVIEHLGTIAKSGTAEFFKNLSGEASKDSQLIGQFGVGFYSAFIVAKKVTVRTRAAGHKANEAVLWESEGEGSFTVDTITKASRGTEITLHLRDEEKEFADEWRLRSIITKYSDHISVPVEMWQEGTPERDGPDGEKIPATEGYWKVMNKATALWMRNKSEISDEEYQEFYKHISHDYTDALLWSHNRVEGKQEYTNLLYIPSKAPWDLWNRDRKHGLKLFVQRVFIMDDAEQFMPSYLRFVQGLIDSNDLPLNVSREILQDNHITKAMRTGITKRVLGMLEKLAKDDAEKYQQFWAEFGQVLKEGPAEDFANRERIAGLLRFASTHTGSAAPTVSLDDYLSRMKEGQNKIYYIVADSHEAAANSPHLELLRKKGIEVLLMSERIDEWLINHLTEYKEKQLHSVTRGELELGELEDAAEKEAQEKLAEESAPLIERIKAALGASVADVKVTSRLTDTPACVVTGEGEMSSQMIKLMQAAGQPVPEVKPTFEVNPAHPLVSRLNDLQDEAAFADWSNLLLQQAQLSEKGSLADPSAFIKLMNQMLLANLK</sequence>
<evidence type="ECO:0000255" key="1">
    <source>
        <dbReference type="HAMAP-Rule" id="MF_00505"/>
    </source>
</evidence>
<feature type="chain" id="PRO_1000014957" description="Chaperone protein HtpG">
    <location>
        <begin position="1"/>
        <end position="637"/>
    </location>
</feature>
<feature type="region of interest" description="A; substrate-binding" evidence="1">
    <location>
        <begin position="1"/>
        <end position="345"/>
    </location>
</feature>
<feature type="region of interest" description="B" evidence="1">
    <location>
        <begin position="346"/>
        <end position="562"/>
    </location>
</feature>
<feature type="region of interest" description="C" evidence="1">
    <location>
        <begin position="563"/>
        <end position="637"/>
    </location>
</feature>
<gene>
    <name evidence="1" type="primary">htpG</name>
    <name type="ordered locus">Shewana3_2443</name>
</gene>
<accession>A0KY03</accession>
<proteinExistence type="inferred from homology"/>
<reference key="1">
    <citation type="submission" date="2006-09" db="EMBL/GenBank/DDBJ databases">
        <title>Complete sequence of chromosome 1 of Shewanella sp. ANA-3.</title>
        <authorList>
            <person name="Copeland A."/>
            <person name="Lucas S."/>
            <person name="Lapidus A."/>
            <person name="Barry K."/>
            <person name="Detter J.C."/>
            <person name="Glavina del Rio T."/>
            <person name="Hammon N."/>
            <person name="Israni S."/>
            <person name="Dalin E."/>
            <person name="Tice H."/>
            <person name="Pitluck S."/>
            <person name="Chertkov O."/>
            <person name="Brettin T."/>
            <person name="Bruce D."/>
            <person name="Han C."/>
            <person name="Tapia R."/>
            <person name="Gilna P."/>
            <person name="Schmutz J."/>
            <person name="Larimer F."/>
            <person name="Land M."/>
            <person name="Hauser L."/>
            <person name="Kyrpides N."/>
            <person name="Kim E."/>
            <person name="Newman D."/>
            <person name="Salticov C."/>
            <person name="Konstantinidis K."/>
            <person name="Klappenback J."/>
            <person name="Tiedje J."/>
            <person name="Richardson P."/>
        </authorList>
    </citation>
    <scope>NUCLEOTIDE SEQUENCE [LARGE SCALE GENOMIC DNA]</scope>
    <source>
        <strain>ANA-3</strain>
    </source>
</reference>